<proteinExistence type="evidence at transcript level"/>
<accession>Q0E1D7</accession>
<accession>A0A0P0VIP6</accession>
<dbReference type="EMBL" id="AP008208">
    <property type="protein sequence ID" value="BAF08701.1"/>
    <property type="molecule type" value="Genomic_DNA"/>
</dbReference>
<dbReference type="EMBL" id="AP014958">
    <property type="protein sequence ID" value="BAS78544.1"/>
    <property type="molecule type" value="Genomic_DNA"/>
</dbReference>
<dbReference type="EMBL" id="CM000139">
    <property type="protein sequence ID" value="EAZ22941.1"/>
    <property type="molecule type" value="Genomic_DNA"/>
</dbReference>
<dbReference type="EMBL" id="AK060911">
    <property type="protein sequence ID" value="BAG87613.1"/>
    <property type="molecule type" value="mRNA"/>
</dbReference>
<dbReference type="EMBL" id="AK065150">
    <property type="protein sequence ID" value="BAG89387.1"/>
    <property type="molecule type" value="mRNA"/>
</dbReference>
<dbReference type="EMBL" id="AK104536">
    <property type="protein sequence ID" value="BAG96765.1"/>
    <property type="molecule type" value="mRNA"/>
</dbReference>
<dbReference type="RefSeq" id="XP_015623781.1">
    <property type="nucleotide sequence ID" value="XM_015768295.1"/>
</dbReference>
<dbReference type="SMR" id="Q0E1D7"/>
<dbReference type="FunCoup" id="Q0E1D7">
    <property type="interactions" value="5"/>
</dbReference>
<dbReference type="STRING" id="39947.Q0E1D7"/>
<dbReference type="PaxDb" id="39947-Q0E1D7"/>
<dbReference type="EnsemblPlants" id="Os02t0460200-01">
    <property type="protein sequence ID" value="Os02t0460200-01"/>
    <property type="gene ID" value="Os02g0460200"/>
</dbReference>
<dbReference type="EnsemblPlants" id="Os02t0460200-02">
    <property type="protein sequence ID" value="Os02t0460200-02"/>
    <property type="gene ID" value="Os02g0460200"/>
</dbReference>
<dbReference type="Gramene" id="Os02t0460200-01">
    <property type="protein sequence ID" value="Os02t0460200-01"/>
    <property type="gene ID" value="Os02g0460200"/>
</dbReference>
<dbReference type="Gramene" id="Os02t0460200-02">
    <property type="protein sequence ID" value="Os02t0460200-02"/>
    <property type="gene ID" value="Os02g0460200"/>
</dbReference>
<dbReference type="KEGG" id="dosa:Os02g0460200"/>
<dbReference type="eggNOG" id="ENOG502S12G">
    <property type="taxonomic scope" value="Eukaryota"/>
</dbReference>
<dbReference type="HOGENOM" id="CLU_121629_0_1_1"/>
<dbReference type="InParanoid" id="Q0E1D7"/>
<dbReference type="OMA" id="RYYENAH"/>
<dbReference type="OrthoDB" id="612242at2759"/>
<dbReference type="Proteomes" id="UP000000763">
    <property type="component" value="Chromosome 2"/>
</dbReference>
<dbReference type="Proteomes" id="UP000007752">
    <property type="component" value="Chromosome 2"/>
</dbReference>
<dbReference type="Proteomes" id="UP000059680">
    <property type="component" value="Chromosome 2"/>
</dbReference>
<dbReference type="GO" id="GO:0009909">
    <property type="term" value="P:regulation of flower development"/>
    <property type="evidence" value="ECO:0007669"/>
    <property type="project" value="InterPro"/>
</dbReference>
<dbReference type="InterPro" id="IPR039274">
    <property type="entry name" value="FPF1"/>
</dbReference>
<dbReference type="PANTHER" id="PTHR33433">
    <property type="entry name" value="FLOWERING-PROMOTING FACTOR 1-LIKE PROTEIN 1"/>
    <property type="match status" value="1"/>
</dbReference>
<keyword id="KW-1185">Reference proteome</keyword>
<sequence length="122" mass="13579">MAGVWVFKDGIVRRVENPGSEESSSAGDGGGGGRRKVLVHVPSGEVVASYEVLERRLRELGWERYLTDPCLLQFHQRSTVHLISVPRDFSKFKLVHMYDIVVKTRNVFEVRDAAAPAVSPAT</sequence>
<gene>
    <name type="ordered locus">Os02g0460200</name>
    <name type="ordered locus">LOC_Os02g26210</name>
    <name type="ORF">OsJ_06629</name>
</gene>
<name>FLP3_ORYSJ</name>
<evidence type="ECO:0000256" key="1">
    <source>
        <dbReference type="SAM" id="MobiDB-lite"/>
    </source>
</evidence>
<evidence type="ECO:0000305" key="2"/>
<comment type="similarity">
    <text evidence="2">Belongs to the FPF1 family.</text>
</comment>
<protein>
    <recommendedName>
        <fullName>Flowering-promoting factor 1-like protein 3</fullName>
    </recommendedName>
    <alternativeName>
        <fullName>FPF1-like protein 3</fullName>
    </alternativeName>
</protein>
<organism>
    <name type="scientific">Oryza sativa subsp. japonica</name>
    <name type="common">Rice</name>
    <dbReference type="NCBI Taxonomy" id="39947"/>
    <lineage>
        <taxon>Eukaryota</taxon>
        <taxon>Viridiplantae</taxon>
        <taxon>Streptophyta</taxon>
        <taxon>Embryophyta</taxon>
        <taxon>Tracheophyta</taxon>
        <taxon>Spermatophyta</taxon>
        <taxon>Magnoliopsida</taxon>
        <taxon>Liliopsida</taxon>
        <taxon>Poales</taxon>
        <taxon>Poaceae</taxon>
        <taxon>BOP clade</taxon>
        <taxon>Oryzoideae</taxon>
        <taxon>Oryzeae</taxon>
        <taxon>Oryzinae</taxon>
        <taxon>Oryza</taxon>
        <taxon>Oryza sativa</taxon>
    </lineage>
</organism>
<feature type="chain" id="PRO_0000417318" description="Flowering-promoting factor 1-like protein 3">
    <location>
        <begin position="1"/>
        <end position="122"/>
    </location>
</feature>
<feature type="region of interest" description="Disordered" evidence="1">
    <location>
        <begin position="16"/>
        <end position="36"/>
    </location>
</feature>
<reference key="1">
    <citation type="journal article" date="2005" name="Nature">
        <title>The map-based sequence of the rice genome.</title>
        <authorList>
            <consortium name="International rice genome sequencing project (IRGSP)"/>
        </authorList>
    </citation>
    <scope>NUCLEOTIDE SEQUENCE [LARGE SCALE GENOMIC DNA]</scope>
    <source>
        <strain>cv. Nipponbare</strain>
    </source>
</reference>
<reference key="2">
    <citation type="journal article" date="2008" name="Nucleic Acids Res.">
        <title>The rice annotation project database (RAP-DB): 2008 update.</title>
        <authorList>
            <consortium name="The rice annotation project (RAP)"/>
        </authorList>
    </citation>
    <scope>GENOME REANNOTATION</scope>
    <source>
        <strain>cv. Nipponbare</strain>
    </source>
</reference>
<reference key="3">
    <citation type="journal article" date="2013" name="Rice">
        <title>Improvement of the Oryza sativa Nipponbare reference genome using next generation sequence and optical map data.</title>
        <authorList>
            <person name="Kawahara Y."/>
            <person name="de la Bastide M."/>
            <person name="Hamilton J.P."/>
            <person name="Kanamori H."/>
            <person name="McCombie W.R."/>
            <person name="Ouyang S."/>
            <person name="Schwartz D.C."/>
            <person name="Tanaka T."/>
            <person name="Wu J."/>
            <person name="Zhou S."/>
            <person name="Childs K.L."/>
            <person name="Davidson R.M."/>
            <person name="Lin H."/>
            <person name="Quesada-Ocampo L."/>
            <person name="Vaillancourt B."/>
            <person name="Sakai H."/>
            <person name="Lee S.S."/>
            <person name="Kim J."/>
            <person name="Numa H."/>
            <person name="Itoh T."/>
            <person name="Buell C.R."/>
            <person name="Matsumoto T."/>
        </authorList>
    </citation>
    <scope>GENOME REANNOTATION</scope>
    <source>
        <strain>cv. Nipponbare</strain>
    </source>
</reference>
<reference key="4">
    <citation type="journal article" date="2005" name="PLoS Biol.">
        <title>The genomes of Oryza sativa: a history of duplications.</title>
        <authorList>
            <person name="Yu J."/>
            <person name="Wang J."/>
            <person name="Lin W."/>
            <person name="Li S."/>
            <person name="Li H."/>
            <person name="Zhou J."/>
            <person name="Ni P."/>
            <person name="Dong W."/>
            <person name="Hu S."/>
            <person name="Zeng C."/>
            <person name="Zhang J."/>
            <person name="Zhang Y."/>
            <person name="Li R."/>
            <person name="Xu Z."/>
            <person name="Li S."/>
            <person name="Li X."/>
            <person name="Zheng H."/>
            <person name="Cong L."/>
            <person name="Lin L."/>
            <person name="Yin J."/>
            <person name="Geng J."/>
            <person name="Li G."/>
            <person name="Shi J."/>
            <person name="Liu J."/>
            <person name="Lv H."/>
            <person name="Li J."/>
            <person name="Wang J."/>
            <person name="Deng Y."/>
            <person name="Ran L."/>
            <person name="Shi X."/>
            <person name="Wang X."/>
            <person name="Wu Q."/>
            <person name="Li C."/>
            <person name="Ren X."/>
            <person name="Wang J."/>
            <person name="Wang X."/>
            <person name="Li D."/>
            <person name="Liu D."/>
            <person name="Zhang X."/>
            <person name="Ji Z."/>
            <person name="Zhao W."/>
            <person name="Sun Y."/>
            <person name="Zhang Z."/>
            <person name="Bao J."/>
            <person name="Han Y."/>
            <person name="Dong L."/>
            <person name="Ji J."/>
            <person name="Chen P."/>
            <person name="Wu S."/>
            <person name="Liu J."/>
            <person name="Xiao Y."/>
            <person name="Bu D."/>
            <person name="Tan J."/>
            <person name="Yang L."/>
            <person name="Ye C."/>
            <person name="Zhang J."/>
            <person name="Xu J."/>
            <person name="Zhou Y."/>
            <person name="Yu Y."/>
            <person name="Zhang B."/>
            <person name="Zhuang S."/>
            <person name="Wei H."/>
            <person name="Liu B."/>
            <person name="Lei M."/>
            <person name="Yu H."/>
            <person name="Li Y."/>
            <person name="Xu H."/>
            <person name="Wei S."/>
            <person name="He X."/>
            <person name="Fang L."/>
            <person name="Zhang Z."/>
            <person name="Zhang Y."/>
            <person name="Huang X."/>
            <person name="Su Z."/>
            <person name="Tong W."/>
            <person name="Li J."/>
            <person name="Tong Z."/>
            <person name="Li S."/>
            <person name="Ye J."/>
            <person name="Wang L."/>
            <person name="Fang L."/>
            <person name="Lei T."/>
            <person name="Chen C.-S."/>
            <person name="Chen H.-C."/>
            <person name="Xu Z."/>
            <person name="Li H."/>
            <person name="Huang H."/>
            <person name="Zhang F."/>
            <person name="Xu H."/>
            <person name="Li N."/>
            <person name="Zhao C."/>
            <person name="Li S."/>
            <person name="Dong L."/>
            <person name="Huang Y."/>
            <person name="Li L."/>
            <person name="Xi Y."/>
            <person name="Qi Q."/>
            <person name="Li W."/>
            <person name="Zhang B."/>
            <person name="Hu W."/>
            <person name="Zhang Y."/>
            <person name="Tian X."/>
            <person name="Jiao Y."/>
            <person name="Liang X."/>
            <person name="Jin J."/>
            <person name="Gao L."/>
            <person name="Zheng W."/>
            <person name="Hao B."/>
            <person name="Liu S.-M."/>
            <person name="Wang W."/>
            <person name="Yuan L."/>
            <person name="Cao M."/>
            <person name="McDermott J."/>
            <person name="Samudrala R."/>
            <person name="Wang J."/>
            <person name="Wong G.K.-S."/>
            <person name="Yang H."/>
        </authorList>
    </citation>
    <scope>NUCLEOTIDE SEQUENCE [LARGE SCALE GENOMIC DNA]</scope>
    <source>
        <strain>cv. Nipponbare</strain>
    </source>
</reference>
<reference key="5">
    <citation type="journal article" date="2003" name="Science">
        <title>Collection, mapping, and annotation of over 28,000 cDNA clones from japonica rice.</title>
        <authorList>
            <consortium name="The rice full-length cDNA consortium"/>
        </authorList>
    </citation>
    <scope>NUCLEOTIDE SEQUENCE [LARGE SCALE MRNA]</scope>
    <source>
        <strain>cv. Nipponbare</strain>
    </source>
</reference>